<sequence>MSKEKFERTKPHVNVGTIGHVDHGKTTLTAAITTVLSKHFGGAARAFDQIDNAPEEKARGITINTSHVEYDTATRHYAHVDCPGHADYVKNMITGAAQMDGAILVVAATDGPMPQTREHILLGRQVGVPYIIVFLNKCDMVDDEELLELVEMEVRELLSQYDFPGDDTPIVRGSALQALNGVAEWEEKILELASHLDNYIPEPERAIDQPFLLPIEDVFSISGRGTVVTGRVERGIIRTGEEVEIVGIKETTKTTVTGVEMFRKLLDEGRAGENIGALLRGTKREEIERGQVLAKPGSITPHTDFESEVYVLSKEEGGRHTPFFKGYRPQFYFRTTDVTGTIELPEGVEMVMPGDNIKMTVSLIHPIAMDQGLRFAIREGGRTVGAGVVAKIIK</sequence>
<protein>
    <recommendedName>
        <fullName evidence="2">Elongation factor Tu</fullName>
        <shortName evidence="2">EF-Tu</shortName>
        <ecNumber evidence="2">3.6.5.3</ecNumber>
    </recommendedName>
</protein>
<organism>
    <name type="scientific">Histophilus somni (strain 129Pt)</name>
    <name type="common">Haemophilus somnus</name>
    <dbReference type="NCBI Taxonomy" id="205914"/>
    <lineage>
        <taxon>Bacteria</taxon>
        <taxon>Pseudomonadati</taxon>
        <taxon>Pseudomonadota</taxon>
        <taxon>Gammaproteobacteria</taxon>
        <taxon>Pasteurellales</taxon>
        <taxon>Pasteurellaceae</taxon>
        <taxon>Histophilus</taxon>
    </lineage>
</organism>
<name>EFTU_HISS1</name>
<evidence type="ECO:0000250" key="1"/>
<evidence type="ECO:0000255" key="2">
    <source>
        <dbReference type="HAMAP-Rule" id="MF_00118"/>
    </source>
</evidence>
<feature type="chain" id="PRO_0000337400" description="Elongation factor Tu">
    <location>
        <begin position="1"/>
        <end position="394"/>
    </location>
</feature>
<feature type="domain" description="tr-type G">
    <location>
        <begin position="10"/>
        <end position="204"/>
    </location>
</feature>
<feature type="region of interest" description="G1" evidence="1">
    <location>
        <begin position="19"/>
        <end position="26"/>
    </location>
</feature>
<feature type="region of interest" description="G2" evidence="1">
    <location>
        <begin position="60"/>
        <end position="64"/>
    </location>
</feature>
<feature type="region of interest" description="G3" evidence="1">
    <location>
        <begin position="81"/>
        <end position="84"/>
    </location>
</feature>
<feature type="region of interest" description="G4" evidence="1">
    <location>
        <begin position="136"/>
        <end position="139"/>
    </location>
</feature>
<feature type="region of interest" description="G5" evidence="1">
    <location>
        <begin position="174"/>
        <end position="176"/>
    </location>
</feature>
<feature type="binding site" evidence="2">
    <location>
        <begin position="19"/>
        <end position="26"/>
    </location>
    <ligand>
        <name>GTP</name>
        <dbReference type="ChEBI" id="CHEBI:37565"/>
    </ligand>
</feature>
<feature type="binding site" evidence="2">
    <location>
        <position position="26"/>
    </location>
    <ligand>
        <name>Mg(2+)</name>
        <dbReference type="ChEBI" id="CHEBI:18420"/>
    </ligand>
</feature>
<feature type="binding site" evidence="2">
    <location>
        <begin position="81"/>
        <end position="85"/>
    </location>
    <ligand>
        <name>GTP</name>
        <dbReference type="ChEBI" id="CHEBI:37565"/>
    </ligand>
</feature>
<feature type="binding site" evidence="2">
    <location>
        <begin position="136"/>
        <end position="139"/>
    </location>
    <ligand>
        <name>GTP</name>
        <dbReference type="ChEBI" id="CHEBI:37565"/>
    </ligand>
</feature>
<reference key="1">
    <citation type="journal article" date="2007" name="J. Bacteriol.">
        <title>Complete genome sequence of Haemophilus somnus (Histophilus somni) strain 129Pt and comparison to Haemophilus ducreyi 35000HP and Haemophilus influenzae Rd.</title>
        <authorList>
            <person name="Challacombe J.F."/>
            <person name="Duncan A.J."/>
            <person name="Brettin T.S."/>
            <person name="Bruce D."/>
            <person name="Chertkov O."/>
            <person name="Detter J.C."/>
            <person name="Han C.S."/>
            <person name="Misra M."/>
            <person name="Richardson P."/>
            <person name="Tapia R."/>
            <person name="Thayer N."/>
            <person name="Xie G."/>
            <person name="Inzana T.J."/>
        </authorList>
    </citation>
    <scope>NUCLEOTIDE SEQUENCE [LARGE SCALE GENOMIC DNA]</scope>
    <source>
        <strain>129Pt</strain>
    </source>
</reference>
<keyword id="KW-0963">Cytoplasm</keyword>
<keyword id="KW-0251">Elongation factor</keyword>
<keyword id="KW-0342">GTP-binding</keyword>
<keyword id="KW-0378">Hydrolase</keyword>
<keyword id="KW-0460">Magnesium</keyword>
<keyword id="KW-0479">Metal-binding</keyword>
<keyword id="KW-0547">Nucleotide-binding</keyword>
<keyword id="KW-0648">Protein biosynthesis</keyword>
<accession>Q0I1U9</accession>
<gene>
    <name evidence="2" type="primary">tuf1</name>
    <name type="synonym">tufA</name>
    <name type="ordered locus">HS_0195</name>
</gene>
<gene>
    <name evidence="2" type="primary">tuf2</name>
    <name type="synonym">tufA</name>
    <name type="ordered locus">HS_1644</name>
</gene>
<proteinExistence type="inferred from homology"/>
<dbReference type="EC" id="3.6.5.3" evidence="2"/>
<dbReference type="EMBL" id="CP000436">
    <property type="protein sequence ID" value="ABI24473.1"/>
    <property type="molecule type" value="Genomic_DNA"/>
</dbReference>
<dbReference type="EMBL" id="CP000436">
    <property type="protein sequence ID" value="ABI25912.1"/>
    <property type="molecule type" value="Genomic_DNA"/>
</dbReference>
<dbReference type="SMR" id="Q0I1U9"/>
<dbReference type="KEGG" id="hso:HS_0195"/>
<dbReference type="KEGG" id="hso:HS_1644"/>
<dbReference type="eggNOG" id="COG0050">
    <property type="taxonomic scope" value="Bacteria"/>
</dbReference>
<dbReference type="HOGENOM" id="CLU_007265_0_2_6"/>
<dbReference type="GO" id="GO:0005829">
    <property type="term" value="C:cytosol"/>
    <property type="evidence" value="ECO:0007669"/>
    <property type="project" value="TreeGrafter"/>
</dbReference>
<dbReference type="GO" id="GO:0005525">
    <property type="term" value="F:GTP binding"/>
    <property type="evidence" value="ECO:0007669"/>
    <property type="project" value="UniProtKB-UniRule"/>
</dbReference>
<dbReference type="GO" id="GO:0003924">
    <property type="term" value="F:GTPase activity"/>
    <property type="evidence" value="ECO:0007669"/>
    <property type="project" value="InterPro"/>
</dbReference>
<dbReference type="GO" id="GO:0097216">
    <property type="term" value="F:guanosine tetraphosphate binding"/>
    <property type="evidence" value="ECO:0007669"/>
    <property type="project" value="UniProtKB-ARBA"/>
</dbReference>
<dbReference type="GO" id="GO:0003746">
    <property type="term" value="F:translation elongation factor activity"/>
    <property type="evidence" value="ECO:0007669"/>
    <property type="project" value="UniProtKB-UniRule"/>
</dbReference>
<dbReference type="CDD" id="cd01884">
    <property type="entry name" value="EF_Tu"/>
    <property type="match status" value="1"/>
</dbReference>
<dbReference type="CDD" id="cd03697">
    <property type="entry name" value="EFTU_II"/>
    <property type="match status" value="1"/>
</dbReference>
<dbReference type="CDD" id="cd03707">
    <property type="entry name" value="EFTU_III"/>
    <property type="match status" value="1"/>
</dbReference>
<dbReference type="FunFam" id="2.40.30.10:FF:000001">
    <property type="entry name" value="Elongation factor Tu"/>
    <property type="match status" value="1"/>
</dbReference>
<dbReference type="FunFam" id="3.40.50.300:FF:000003">
    <property type="entry name" value="Elongation factor Tu"/>
    <property type="match status" value="1"/>
</dbReference>
<dbReference type="Gene3D" id="3.40.50.300">
    <property type="entry name" value="P-loop containing nucleotide triphosphate hydrolases"/>
    <property type="match status" value="1"/>
</dbReference>
<dbReference type="Gene3D" id="2.40.30.10">
    <property type="entry name" value="Translation factors"/>
    <property type="match status" value="2"/>
</dbReference>
<dbReference type="HAMAP" id="MF_00118_B">
    <property type="entry name" value="EF_Tu_B"/>
    <property type="match status" value="1"/>
</dbReference>
<dbReference type="InterPro" id="IPR041709">
    <property type="entry name" value="EF-Tu_GTP-bd"/>
</dbReference>
<dbReference type="InterPro" id="IPR050055">
    <property type="entry name" value="EF-Tu_GTPase"/>
</dbReference>
<dbReference type="InterPro" id="IPR004161">
    <property type="entry name" value="EFTu-like_2"/>
</dbReference>
<dbReference type="InterPro" id="IPR033720">
    <property type="entry name" value="EFTU_2"/>
</dbReference>
<dbReference type="InterPro" id="IPR031157">
    <property type="entry name" value="G_TR_CS"/>
</dbReference>
<dbReference type="InterPro" id="IPR027417">
    <property type="entry name" value="P-loop_NTPase"/>
</dbReference>
<dbReference type="InterPro" id="IPR005225">
    <property type="entry name" value="Small_GTP-bd"/>
</dbReference>
<dbReference type="InterPro" id="IPR000795">
    <property type="entry name" value="T_Tr_GTP-bd_dom"/>
</dbReference>
<dbReference type="InterPro" id="IPR009000">
    <property type="entry name" value="Transl_B-barrel_sf"/>
</dbReference>
<dbReference type="InterPro" id="IPR009001">
    <property type="entry name" value="Transl_elong_EF1A/Init_IF2_C"/>
</dbReference>
<dbReference type="InterPro" id="IPR004541">
    <property type="entry name" value="Transl_elong_EFTu/EF1A_bac/org"/>
</dbReference>
<dbReference type="InterPro" id="IPR004160">
    <property type="entry name" value="Transl_elong_EFTu/EF1A_C"/>
</dbReference>
<dbReference type="NCBIfam" id="TIGR00485">
    <property type="entry name" value="EF-Tu"/>
    <property type="match status" value="1"/>
</dbReference>
<dbReference type="NCBIfam" id="NF000766">
    <property type="entry name" value="PRK00049.1"/>
    <property type="match status" value="1"/>
</dbReference>
<dbReference type="NCBIfam" id="NF009372">
    <property type="entry name" value="PRK12735.1"/>
    <property type="match status" value="1"/>
</dbReference>
<dbReference type="NCBIfam" id="NF009373">
    <property type="entry name" value="PRK12736.1"/>
    <property type="match status" value="1"/>
</dbReference>
<dbReference type="NCBIfam" id="TIGR00231">
    <property type="entry name" value="small_GTP"/>
    <property type="match status" value="1"/>
</dbReference>
<dbReference type="PANTHER" id="PTHR43721:SF22">
    <property type="entry name" value="ELONGATION FACTOR TU, MITOCHONDRIAL"/>
    <property type="match status" value="1"/>
</dbReference>
<dbReference type="PANTHER" id="PTHR43721">
    <property type="entry name" value="ELONGATION FACTOR TU-RELATED"/>
    <property type="match status" value="1"/>
</dbReference>
<dbReference type="Pfam" id="PF00009">
    <property type="entry name" value="GTP_EFTU"/>
    <property type="match status" value="1"/>
</dbReference>
<dbReference type="Pfam" id="PF03144">
    <property type="entry name" value="GTP_EFTU_D2"/>
    <property type="match status" value="1"/>
</dbReference>
<dbReference type="Pfam" id="PF03143">
    <property type="entry name" value="GTP_EFTU_D3"/>
    <property type="match status" value="1"/>
</dbReference>
<dbReference type="PRINTS" id="PR00315">
    <property type="entry name" value="ELONGATNFCT"/>
</dbReference>
<dbReference type="SUPFAM" id="SSF50465">
    <property type="entry name" value="EF-Tu/eEF-1alpha/eIF2-gamma C-terminal domain"/>
    <property type="match status" value="1"/>
</dbReference>
<dbReference type="SUPFAM" id="SSF52540">
    <property type="entry name" value="P-loop containing nucleoside triphosphate hydrolases"/>
    <property type="match status" value="1"/>
</dbReference>
<dbReference type="SUPFAM" id="SSF50447">
    <property type="entry name" value="Translation proteins"/>
    <property type="match status" value="1"/>
</dbReference>
<dbReference type="PROSITE" id="PS00301">
    <property type="entry name" value="G_TR_1"/>
    <property type="match status" value="1"/>
</dbReference>
<dbReference type="PROSITE" id="PS51722">
    <property type="entry name" value="G_TR_2"/>
    <property type="match status" value="1"/>
</dbReference>
<comment type="function">
    <text evidence="2">GTP hydrolase that promotes the GTP-dependent binding of aminoacyl-tRNA to the A-site of ribosomes during protein biosynthesis.</text>
</comment>
<comment type="catalytic activity">
    <reaction evidence="2">
        <text>GTP + H2O = GDP + phosphate + H(+)</text>
        <dbReference type="Rhea" id="RHEA:19669"/>
        <dbReference type="ChEBI" id="CHEBI:15377"/>
        <dbReference type="ChEBI" id="CHEBI:15378"/>
        <dbReference type="ChEBI" id="CHEBI:37565"/>
        <dbReference type="ChEBI" id="CHEBI:43474"/>
        <dbReference type="ChEBI" id="CHEBI:58189"/>
        <dbReference type="EC" id="3.6.5.3"/>
    </reaction>
    <physiologicalReaction direction="left-to-right" evidence="2">
        <dbReference type="Rhea" id="RHEA:19670"/>
    </physiologicalReaction>
</comment>
<comment type="subunit">
    <text evidence="2">Monomer.</text>
</comment>
<comment type="subcellular location">
    <subcellularLocation>
        <location evidence="2">Cytoplasm</location>
    </subcellularLocation>
</comment>
<comment type="similarity">
    <text evidence="2">Belongs to the TRAFAC class translation factor GTPase superfamily. Classic translation factor GTPase family. EF-Tu/EF-1A subfamily.</text>
</comment>